<reference key="1">
    <citation type="submission" date="1999-07" db="EMBL/GenBank/DDBJ databases">
        <title>Rhizobium meliloti carries two sets of nuo genes.</title>
        <authorList>
            <person name="Putnoky P."/>
            <person name="Jady B."/>
            <person name="Chellapilla K.P."/>
            <person name="Barta F."/>
            <person name="Kiss E."/>
        </authorList>
    </citation>
    <scope>NUCLEOTIDE SEQUENCE [GENOMIC DNA]</scope>
    <source>
        <strain>41</strain>
    </source>
</reference>
<reference key="2">
    <citation type="journal article" date="2001" name="Proc. Natl. Acad. Sci. U.S.A.">
        <title>Nucleotide sequence and predicted functions of the entire Sinorhizobium meliloti pSymA megaplasmid.</title>
        <authorList>
            <person name="Barnett M.J."/>
            <person name="Fisher R.F."/>
            <person name="Jones T."/>
            <person name="Komp C."/>
            <person name="Abola A.P."/>
            <person name="Barloy-Hubler F."/>
            <person name="Bowser L."/>
            <person name="Capela D."/>
            <person name="Galibert F."/>
            <person name="Gouzy J."/>
            <person name="Gurjal M."/>
            <person name="Hong A."/>
            <person name="Huizar L."/>
            <person name="Hyman R.W."/>
            <person name="Kahn D."/>
            <person name="Kahn M.L."/>
            <person name="Kalman S."/>
            <person name="Keating D.H."/>
            <person name="Palm C."/>
            <person name="Peck M.C."/>
            <person name="Surzycki R."/>
            <person name="Wells D.H."/>
            <person name="Yeh K.-C."/>
            <person name="Davis R.W."/>
            <person name="Federspiel N.A."/>
            <person name="Long S.R."/>
        </authorList>
    </citation>
    <scope>NUCLEOTIDE SEQUENCE [LARGE SCALE GENOMIC DNA]</scope>
    <source>
        <strain>1021</strain>
    </source>
</reference>
<reference key="3">
    <citation type="journal article" date="2001" name="Science">
        <title>The composite genome of the legume symbiont Sinorhizobium meliloti.</title>
        <authorList>
            <person name="Galibert F."/>
            <person name="Finan T.M."/>
            <person name="Long S.R."/>
            <person name="Puehler A."/>
            <person name="Abola P."/>
            <person name="Ampe F."/>
            <person name="Barloy-Hubler F."/>
            <person name="Barnett M.J."/>
            <person name="Becker A."/>
            <person name="Boistard P."/>
            <person name="Bothe G."/>
            <person name="Boutry M."/>
            <person name="Bowser L."/>
            <person name="Buhrmester J."/>
            <person name="Cadieu E."/>
            <person name="Capela D."/>
            <person name="Chain P."/>
            <person name="Cowie A."/>
            <person name="Davis R.W."/>
            <person name="Dreano S."/>
            <person name="Federspiel N.A."/>
            <person name="Fisher R.F."/>
            <person name="Gloux S."/>
            <person name="Godrie T."/>
            <person name="Goffeau A."/>
            <person name="Golding B."/>
            <person name="Gouzy J."/>
            <person name="Gurjal M."/>
            <person name="Hernandez-Lucas I."/>
            <person name="Hong A."/>
            <person name="Huizar L."/>
            <person name="Hyman R.W."/>
            <person name="Jones T."/>
            <person name="Kahn D."/>
            <person name="Kahn M.L."/>
            <person name="Kalman S."/>
            <person name="Keating D.H."/>
            <person name="Kiss E."/>
            <person name="Komp C."/>
            <person name="Lelaure V."/>
            <person name="Masuy D."/>
            <person name="Palm C."/>
            <person name="Peck M.C."/>
            <person name="Pohl T.M."/>
            <person name="Portetelle D."/>
            <person name="Purnelle B."/>
            <person name="Ramsperger U."/>
            <person name="Surzycki R."/>
            <person name="Thebault P."/>
            <person name="Vandenbol M."/>
            <person name="Vorhoelter F.J."/>
            <person name="Weidner S."/>
            <person name="Wells D.H."/>
            <person name="Wong K."/>
            <person name="Yeh K.-C."/>
            <person name="Batut J."/>
        </authorList>
    </citation>
    <scope>NUCLEOTIDE SEQUENCE [LARGE SCALE GENOMIC DNA]</scope>
    <source>
        <strain>1021</strain>
    </source>
</reference>
<comment type="function">
    <text evidence="1">NDH-1 shuttles electrons from NADH, via FMN and iron-sulfur (Fe-S) centers, to quinones in the respiratory chain. The immediate electron acceptor for the enzyme in this species is believed to be ubiquinone. Couples the redox reaction to proton translocation (for every two electrons transferred, four hydrogen ions are translocated across the cytoplasmic membrane), and thus conserves the redox energy in a proton gradient.</text>
</comment>
<comment type="catalytic activity">
    <reaction evidence="1">
        <text>a quinone + NADH + 5 H(+)(in) = a quinol + NAD(+) + 4 H(+)(out)</text>
        <dbReference type="Rhea" id="RHEA:57888"/>
        <dbReference type="ChEBI" id="CHEBI:15378"/>
        <dbReference type="ChEBI" id="CHEBI:24646"/>
        <dbReference type="ChEBI" id="CHEBI:57540"/>
        <dbReference type="ChEBI" id="CHEBI:57945"/>
        <dbReference type="ChEBI" id="CHEBI:132124"/>
    </reaction>
</comment>
<comment type="subunit">
    <text evidence="1">NDH-1 is composed of 14 different subunits. Subunits NuoA, H, J, K, L, M, N constitute the membrane sector of the complex.</text>
</comment>
<comment type="subcellular location">
    <subcellularLocation>
        <location evidence="1">Cell inner membrane</location>
        <topology evidence="1">Multi-pass membrane protein</topology>
    </subcellularLocation>
</comment>
<comment type="similarity">
    <text evidence="1">Belongs to the complex I subunit 3 family.</text>
</comment>
<dbReference type="EC" id="7.1.1.-" evidence="1"/>
<dbReference type="EMBL" id="AJ245399">
    <property type="protein sequence ID" value="CAB51629.1"/>
    <property type="molecule type" value="Genomic_DNA"/>
</dbReference>
<dbReference type="EMBL" id="AE006469">
    <property type="protein sequence ID" value="AAK65492.1"/>
    <property type="molecule type" value="Genomic_DNA"/>
</dbReference>
<dbReference type="PIR" id="B95366">
    <property type="entry name" value="B95366"/>
</dbReference>
<dbReference type="RefSeq" id="NP_436080.1">
    <property type="nucleotide sequence ID" value="NC_003037.1"/>
</dbReference>
<dbReference type="RefSeq" id="WP_010967802.1">
    <property type="nucleotide sequence ID" value="NC_003037.1"/>
</dbReference>
<dbReference type="SMR" id="P56895"/>
<dbReference type="EnsemblBacteria" id="AAK65492">
    <property type="protein sequence ID" value="AAK65492"/>
    <property type="gene ID" value="SMa1533"/>
</dbReference>
<dbReference type="KEGG" id="sme:SMa1533"/>
<dbReference type="PATRIC" id="fig|266834.11.peg.865"/>
<dbReference type="HOGENOM" id="CLU_119549_3_1_5"/>
<dbReference type="OrthoDB" id="9791970at2"/>
<dbReference type="PRO" id="PR:P56895"/>
<dbReference type="Proteomes" id="UP000001976">
    <property type="component" value="Plasmid pSymA"/>
</dbReference>
<dbReference type="GO" id="GO:0030964">
    <property type="term" value="C:NADH dehydrogenase complex"/>
    <property type="evidence" value="ECO:0007669"/>
    <property type="project" value="TreeGrafter"/>
</dbReference>
<dbReference type="GO" id="GO:0005886">
    <property type="term" value="C:plasma membrane"/>
    <property type="evidence" value="ECO:0007669"/>
    <property type="project" value="UniProtKB-SubCell"/>
</dbReference>
<dbReference type="GO" id="GO:0008137">
    <property type="term" value="F:NADH dehydrogenase (ubiquinone) activity"/>
    <property type="evidence" value="ECO:0007669"/>
    <property type="project" value="InterPro"/>
</dbReference>
<dbReference type="GO" id="GO:0050136">
    <property type="term" value="F:NADH:ubiquinone reductase (non-electrogenic) activity"/>
    <property type="evidence" value="ECO:0007669"/>
    <property type="project" value="UniProtKB-UniRule"/>
</dbReference>
<dbReference type="GO" id="GO:0048038">
    <property type="term" value="F:quinone binding"/>
    <property type="evidence" value="ECO:0007669"/>
    <property type="project" value="UniProtKB-KW"/>
</dbReference>
<dbReference type="Gene3D" id="1.20.58.1610">
    <property type="entry name" value="NADH:ubiquinone/plastoquinone oxidoreductase, chain 3"/>
    <property type="match status" value="1"/>
</dbReference>
<dbReference type="HAMAP" id="MF_01394">
    <property type="entry name" value="NDH1_NuoA"/>
    <property type="match status" value="1"/>
</dbReference>
<dbReference type="InterPro" id="IPR023043">
    <property type="entry name" value="NAD(P)H_OxRDtase_bac/plastid"/>
</dbReference>
<dbReference type="InterPro" id="IPR000440">
    <property type="entry name" value="NADH_UbQ/plastoQ_OxRdtase_su3"/>
</dbReference>
<dbReference type="InterPro" id="IPR038430">
    <property type="entry name" value="NDAH_ubi_oxred_su3_sf"/>
</dbReference>
<dbReference type="PANTHER" id="PTHR11058">
    <property type="entry name" value="NADH-UBIQUINONE OXIDOREDUCTASE CHAIN 3"/>
    <property type="match status" value="1"/>
</dbReference>
<dbReference type="PANTHER" id="PTHR11058:SF9">
    <property type="entry name" value="NADH-UBIQUINONE OXIDOREDUCTASE CHAIN 3"/>
    <property type="match status" value="1"/>
</dbReference>
<dbReference type="Pfam" id="PF00507">
    <property type="entry name" value="Oxidored_q4"/>
    <property type="match status" value="1"/>
</dbReference>
<protein>
    <recommendedName>
        <fullName evidence="1">NADH-quinone oxidoreductase subunit A 2</fullName>
        <ecNumber evidence="1">7.1.1.-</ecNumber>
    </recommendedName>
    <alternativeName>
        <fullName evidence="1">NADH dehydrogenase I subunit A 2</fullName>
    </alternativeName>
    <alternativeName>
        <fullName evidence="1">NDH-1 subunit A 2</fullName>
    </alternativeName>
    <alternativeName>
        <fullName evidence="1">NUO1 2</fullName>
    </alternativeName>
</protein>
<feature type="chain" id="PRO_0000117873" description="NADH-quinone oxidoreductase subunit A 2">
    <location>
        <begin position="1"/>
        <end position="121"/>
    </location>
</feature>
<feature type="transmembrane region" description="Helical" evidence="1">
    <location>
        <begin position="6"/>
        <end position="26"/>
    </location>
</feature>
<feature type="transmembrane region" description="Helical" evidence="1">
    <location>
        <begin position="60"/>
        <end position="80"/>
    </location>
</feature>
<feature type="transmembrane region" description="Helical" evidence="1">
    <location>
        <begin position="89"/>
        <end position="109"/>
    </location>
</feature>
<keyword id="KW-0997">Cell inner membrane</keyword>
<keyword id="KW-1003">Cell membrane</keyword>
<keyword id="KW-0472">Membrane</keyword>
<keyword id="KW-0520">NAD</keyword>
<keyword id="KW-0614">Plasmid</keyword>
<keyword id="KW-0874">Quinone</keyword>
<keyword id="KW-1185">Reference proteome</keyword>
<keyword id="KW-1278">Translocase</keyword>
<keyword id="KW-0812">Transmembrane</keyword>
<keyword id="KW-1133">Transmembrane helix</keyword>
<keyword id="KW-0813">Transport</keyword>
<keyword id="KW-0830">Ubiquinone</keyword>
<organism>
    <name type="scientific">Rhizobium meliloti (strain 1021)</name>
    <name type="common">Ensifer meliloti</name>
    <name type="synonym">Sinorhizobium meliloti</name>
    <dbReference type="NCBI Taxonomy" id="266834"/>
    <lineage>
        <taxon>Bacteria</taxon>
        <taxon>Pseudomonadati</taxon>
        <taxon>Pseudomonadota</taxon>
        <taxon>Alphaproteobacteria</taxon>
        <taxon>Hyphomicrobiales</taxon>
        <taxon>Rhizobiaceae</taxon>
        <taxon>Sinorhizobium/Ensifer group</taxon>
        <taxon>Sinorhizobium</taxon>
    </lineage>
</organism>
<proteinExistence type="inferred from homology"/>
<geneLocation type="plasmid">
    <name>pSymA</name>
    <name>megaplasmid 1</name>
</geneLocation>
<name>NUOA2_RHIME</name>
<evidence type="ECO:0000255" key="1">
    <source>
        <dbReference type="HAMAP-Rule" id="MF_01394"/>
    </source>
</evidence>
<sequence>MTAMEFLPVLFMVTGIVLVAAATLFVSSLLRPSNPYPEKNAPYECGMEAAGEAAGGRFRVPFFILAILLVVFDVEAMFLFPWAVVLKEIGFVGYIEMFVFMLLLLVGFAYAWLKGALEWQE</sequence>
<gene>
    <name evidence="1" type="primary">nuoA2</name>
    <name type="ordered locus">RA0834</name>
    <name type="ORF">SMa1533</name>
</gene>
<accession>P56895</accession>